<feature type="chain" id="PRO_0000084404" description="Lens epithelial cell protein LEP503">
    <location>
        <begin position="1"/>
        <end position="61"/>
    </location>
</feature>
<reference key="1">
    <citation type="journal article" date="2000" name="Exp. Eye Res.">
        <title>A novel lens epithelium gene, LEP503, is highly conserved in different vertebrate species and is developmentally regulated in postnatal rat lens.</title>
        <authorList>
            <person name="Wen Y."/>
            <person name="Sachs G."/>
            <person name="Athmann C."/>
        </authorList>
    </citation>
    <scope>NUCLEOTIDE SEQUENCE [GENOMIC DNA]</scope>
    <source>
        <strain>SWR/J</strain>
    </source>
</reference>
<reference key="2">
    <citation type="journal article" date="2004" name="Genome Res.">
        <title>The status, quality, and expansion of the NIH full-length cDNA project: the Mammalian Gene Collection (MGC).</title>
        <authorList>
            <consortium name="The MGC Project Team"/>
        </authorList>
    </citation>
    <scope>NUCLEOTIDE SEQUENCE [LARGE SCALE MRNA]</scope>
    <source>
        <strain>FVB/N-3</strain>
        <tissue>Mammary gland</tissue>
    </source>
</reference>
<proteinExistence type="predicted"/>
<name>LENEP_MOUSE</name>
<protein>
    <recommendedName>
        <fullName>Lens epithelial cell protein LEP503</fullName>
    </recommendedName>
</protein>
<organism>
    <name type="scientific">Mus musculus</name>
    <name type="common">Mouse</name>
    <dbReference type="NCBI Taxonomy" id="10090"/>
    <lineage>
        <taxon>Eukaryota</taxon>
        <taxon>Metazoa</taxon>
        <taxon>Chordata</taxon>
        <taxon>Craniata</taxon>
        <taxon>Vertebrata</taxon>
        <taxon>Euteleostomi</taxon>
        <taxon>Mammalia</taxon>
        <taxon>Eutheria</taxon>
        <taxon>Euarchontoglires</taxon>
        <taxon>Glires</taxon>
        <taxon>Rodentia</taxon>
        <taxon>Myomorpha</taxon>
        <taxon>Muroidea</taxon>
        <taxon>Muridae</taxon>
        <taxon>Murinae</taxon>
        <taxon>Mus</taxon>
        <taxon>Mus</taxon>
    </lineage>
</organism>
<sequence length="61" mass="6923">MRPPTQPLTQALPFSLRDALRGTGLQVPVIKMGTGWEGMYRTLKEVAYILLCCWCIKELLD</sequence>
<accession>Q9WVB6</accession>
<keyword id="KW-1185">Reference proteome</keyword>
<dbReference type="EMBL" id="AF144411">
    <property type="protein sequence ID" value="AAD38377.1"/>
    <property type="molecule type" value="Genomic_DNA"/>
</dbReference>
<dbReference type="EMBL" id="BC006806">
    <property type="protein sequence ID" value="AAH06806.1"/>
    <property type="molecule type" value="mRNA"/>
</dbReference>
<dbReference type="CCDS" id="CCDS38491.1"/>
<dbReference type="RefSeq" id="NP_065263.1">
    <property type="nucleotide sequence ID" value="NM_020517.4"/>
</dbReference>
<dbReference type="FunCoup" id="Q9WVB6">
    <property type="interactions" value="228"/>
</dbReference>
<dbReference type="STRING" id="10090.ENSMUSP00000052968"/>
<dbReference type="PhosphoSitePlus" id="Q9WVB6"/>
<dbReference type="PaxDb" id="10090-ENSMUSP00000052968"/>
<dbReference type="ProteomicsDB" id="292250"/>
<dbReference type="Antibodypedia" id="48815">
    <property type="antibodies" value="7 antibodies from 2 providers"/>
</dbReference>
<dbReference type="DNASU" id="57275"/>
<dbReference type="Ensembl" id="ENSMUST00000057431.6">
    <property type="protein sequence ID" value="ENSMUSP00000052968.5"/>
    <property type="gene ID" value="ENSMUSG00000078173.4"/>
</dbReference>
<dbReference type="GeneID" id="57275"/>
<dbReference type="KEGG" id="mmu:57275"/>
<dbReference type="UCSC" id="uc012csm.1">
    <property type="organism name" value="mouse"/>
</dbReference>
<dbReference type="AGR" id="MGI:1930020"/>
<dbReference type="CTD" id="55891"/>
<dbReference type="MGI" id="MGI:1930020">
    <property type="gene designation" value="Lenep"/>
</dbReference>
<dbReference type="VEuPathDB" id="HostDB:ENSMUSG00000078173"/>
<dbReference type="eggNOG" id="ENOG502SAUH">
    <property type="taxonomic scope" value="Eukaryota"/>
</dbReference>
<dbReference type="GeneTree" id="ENSGT00390000002996"/>
<dbReference type="HOGENOM" id="CLU_2921930_0_0_1"/>
<dbReference type="InParanoid" id="Q9WVB6"/>
<dbReference type="OMA" id="MQARTQP"/>
<dbReference type="OrthoDB" id="3257at9989"/>
<dbReference type="PhylomeDB" id="Q9WVB6"/>
<dbReference type="TreeFam" id="TF341569"/>
<dbReference type="BioGRID-ORCS" id="57275">
    <property type="hits" value="1 hit in 42 CRISPR screens"/>
</dbReference>
<dbReference type="ChiTaRS" id="Lenep">
    <property type="organism name" value="mouse"/>
</dbReference>
<dbReference type="PRO" id="PR:Q9WVB6"/>
<dbReference type="Proteomes" id="UP000000589">
    <property type="component" value="Chromosome 3"/>
</dbReference>
<dbReference type="RNAct" id="Q9WVB6">
    <property type="molecule type" value="protein"/>
</dbReference>
<dbReference type="Bgee" id="ENSMUSG00000078173">
    <property type="expression patterns" value="Expressed in lens of camera-type eye and 32 other cell types or tissues"/>
</dbReference>
<dbReference type="ExpressionAtlas" id="Q9WVB6">
    <property type="expression patterns" value="baseline"/>
</dbReference>
<dbReference type="GO" id="GO:0005737">
    <property type="term" value="C:cytoplasm"/>
    <property type="evidence" value="ECO:0000250"/>
    <property type="project" value="MGI"/>
</dbReference>
<dbReference type="InterPro" id="IPR029194">
    <property type="entry name" value="LEP503"/>
</dbReference>
<dbReference type="PANTHER" id="PTHR16968">
    <property type="entry name" value="LENS EPITHELIAL CELL PROTEIN LEP503"/>
    <property type="match status" value="1"/>
</dbReference>
<dbReference type="PANTHER" id="PTHR16968:SF2">
    <property type="entry name" value="LENS EPITHELIAL CELL PROTEIN LEP503"/>
    <property type="match status" value="1"/>
</dbReference>
<dbReference type="Pfam" id="PF15221">
    <property type="entry name" value="LEP503"/>
    <property type="match status" value="1"/>
</dbReference>
<gene>
    <name type="primary">Lenep</name>
    <name type="synonym">Lep503</name>
</gene>